<comment type="function">
    <text evidence="1">Subunit a, of the mitochondrial membrane ATP synthase complex (F(1)F(0) ATP synthase or Complex V) that produces ATP from ADP in the presence of a proton gradient across the membrane which is generated by electron transport complexes of the respiratory chain. ATP synthase complex consist of a soluble F(1) head domain - the catalytic core - and a membrane F(1) domain - the membrane proton channel. These two domains are linked by a central stalk rotating inside the F(1) region and a stationary peripheral stalk. During catalysis, ATP synthesis in the catalytic domain of F(1) is coupled via a rotary mechanism of the central stalk subunits to proton translocation. With the subunit c (ATP5MC1), forms the proton-conducting channel in the F(0) domain, that contains two crucial half-channels (inlet and outlet) that facilitate proton movement from the mitochondrial intermembrane space (IMS) into the matrix. Protons are taken up via the inlet half-channel and released through the outlet half-channel, following a Grotthuss mechanism.</text>
</comment>
<comment type="catalytic activity">
    <reaction evidence="1">
        <text>H(+)(in) = H(+)(out)</text>
        <dbReference type="Rhea" id="RHEA:34979"/>
        <dbReference type="ChEBI" id="CHEBI:15378"/>
    </reaction>
</comment>
<comment type="subunit">
    <text evidence="1">Component of the ATP synthase complex composed at least of ATP5F1A/subunit alpha, ATP5F1B/subunit beta, ATP5MC1/subunit c (homooctomer), MT-ATP6/subunit a, MT-ATP8/subunit 8, ATP5ME/subunit e, ATP5MF/subunit f, ATP5MG/subunit g, ATP5MK/subunit k, ATP5MJ/subunit j, ATP5F1C/subunit gamma, ATP5F1D/subunit delta, ATP5F1E/subunit epsilon, ATP5PF/subunit F6, ATP5PB/subunit b, ATP5PD/subunit d, ATP5PO/subunit OSCP. ATP synthase complex consists of a soluble F(1) head domain (subunits alpha(3) and beta(3)) - the catalytic core - and a membrane F(0) domain - the membrane proton channel (subunits c, a, 8, e, f, g, k and j). These two domains are linked by a central stalk (subunits gamma, delta, and epsilon) rotating inside the F1 region and a stationary peripheral stalk (subunits F6, b, d, and OSCP). Interacts with DNAJC30; interaction is direct.</text>
</comment>
<comment type="subcellular location">
    <subcellularLocation>
        <location>Mitochondrion inner membrane</location>
        <topology>Multi-pass membrane protein</topology>
    </subcellularLocation>
</comment>
<comment type="similarity">
    <text evidence="3">Belongs to the ATPase A chain family.</text>
</comment>
<evidence type="ECO:0000250" key="1">
    <source>
        <dbReference type="UniProtKB" id="P00846"/>
    </source>
</evidence>
<evidence type="ECO:0000255" key="2"/>
<evidence type="ECO:0000305" key="3"/>
<organism>
    <name type="scientific">Papio hamadryas</name>
    <name type="common">Hamadryas baboon</name>
    <dbReference type="NCBI Taxonomy" id="9557"/>
    <lineage>
        <taxon>Eukaryota</taxon>
        <taxon>Metazoa</taxon>
        <taxon>Chordata</taxon>
        <taxon>Craniata</taxon>
        <taxon>Vertebrata</taxon>
        <taxon>Euteleostomi</taxon>
        <taxon>Mammalia</taxon>
        <taxon>Eutheria</taxon>
        <taxon>Euarchontoglires</taxon>
        <taxon>Primates</taxon>
        <taxon>Haplorrhini</taxon>
        <taxon>Catarrhini</taxon>
        <taxon>Cercopithecidae</taxon>
        <taxon>Cercopithecinae</taxon>
        <taxon>Papio</taxon>
    </lineage>
</organism>
<name>ATP6_PAPHA</name>
<feature type="chain" id="PRO_0000082149" description="ATP synthase F(0) complex subunit a">
    <location>
        <begin position="1"/>
        <end position="226"/>
    </location>
</feature>
<feature type="transmembrane region" description="Helical" evidence="2">
    <location>
        <begin position="11"/>
        <end position="31"/>
    </location>
</feature>
<feature type="transmembrane region" description="Helical" evidence="2">
    <location>
        <begin position="68"/>
        <end position="88"/>
    </location>
</feature>
<feature type="transmembrane region" description="Helical" evidence="2">
    <location>
        <begin position="97"/>
        <end position="117"/>
    </location>
</feature>
<feature type="transmembrane region" description="Helical" evidence="2">
    <location>
        <begin position="138"/>
        <end position="158"/>
    </location>
</feature>
<feature type="transmembrane region" description="Helical" evidence="2">
    <location>
        <begin position="164"/>
        <end position="184"/>
    </location>
</feature>
<feature type="transmembrane region" description="Helical" evidence="2">
    <location>
        <begin position="194"/>
        <end position="214"/>
    </location>
</feature>
<gene>
    <name evidence="1" type="primary">MT-ATP6</name>
    <name type="synonym">ATP6</name>
    <name type="synonym">ATPASE6</name>
    <name type="synonym">MTATP6</name>
</gene>
<protein>
    <recommendedName>
        <fullName evidence="1">ATP synthase F(0) complex subunit a</fullName>
    </recommendedName>
    <alternativeName>
        <fullName>F-ATPase protein 6</fullName>
    </alternativeName>
    <alternativeName>
        <fullName evidence="1">Proton-conducting channel, ATP synthase F(0) complex subunit a</fullName>
    </alternativeName>
</protein>
<geneLocation type="mitochondrion"/>
<accession>Q9ZXX9</accession>
<keyword id="KW-0066">ATP synthesis</keyword>
<keyword id="KW-0138">CF(0)</keyword>
<keyword id="KW-0375">Hydrogen ion transport</keyword>
<keyword id="KW-0406">Ion transport</keyword>
<keyword id="KW-0472">Membrane</keyword>
<keyword id="KW-0496">Mitochondrion</keyword>
<keyword id="KW-0999">Mitochondrion inner membrane</keyword>
<keyword id="KW-0812">Transmembrane</keyword>
<keyword id="KW-1133">Transmembrane helix</keyword>
<keyword id="KW-0813">Transport</keyword>
<sequence>MNENLFTSFSAPTILGQPATIPIIMFPTLLIPTSKHLINNQLTTVQQNLIKLTLKQMMAPHNAKGQSWSLMLMSLITFITMTNLLGLLPHSFTPTTQLSMNLAMAIPLWAGTIITGLRFKTKNFLAHMLPQGTPTPLIPMLVMIETISLLIQPMALAVRLTANITAGHLLMHLIGNTMLTLSTINLSTTLLTSVLLMLLTILEIAVALIQAYVFTLLVNLYLHNNT</sequence>
<dbReference type="EMBL" id="Y18001">
    <property type="protein sequence ID" value="CAA76999.1"/>
    <property type="molecule type" value="Genomic_DNA"/>
</dbReference>
<dbReference type="PIR" id="T11511">
    <property type="entry name" value="T11511"/>
</dbReference>
<dbReference type="RefSeq" id="NP_008463.1">
    <property type="nucleotide sequence ID" value="NC_001992.1"/>
</dbReference>
<dbReference type="SMR" id="Q9ZXX9"/>
<dbReference type="GeneID" id="808331"/>
<dbReference type="CTD" id="4508"/>
<dbReference type="GO" id="GO:0005743">
    <property type="term" value="C:mitochondrial inner membrane"/>
    <property type="evidence" value="ECO:0007669"/>
    <property type="project" value="UniProtKB-SubCell"/>
</dbReference>
<dbReference type="GO" id="GO:0045259">
    <property type="term" value="C:proton-transporting ATP synthase complex"/>
    <property type="evidence" value="ECO:0000250"/>
    <property type="project" value="UniProtKB"/>
</dbReference>
<dbReference type="GO" id="GO:0015252">
    <property type="term" value="F:proton channel activity"/>
    <property type="evidence" value="ECO:0000250"/>
    <property type="project" value="UniProtKB"/>
</dbReference>
<dbReference type="GO" id="GO:0046933">
    <property type="term" value="F:proton-transporting ATP synthase activity, rotational mechanism"/>
    <property type="evidence" value="ECO:0007669"/>
    <property type="project" value="TreeGrafter"/>
</dbReference>
<dbReference type="GO" id="GO:0015986">
    <property type="term" value="P:proton motive force-driven ATP synthesis"/>
    <property type="evidence" value="ECO:0000250"/>
    <property type="project" value="UniProtKB"/>
</dbReference>
<dbReference type="GO" id="GO:1902600">
    <property type="term" value="P:proton transmembrane transport"/>
    <property type="evidence" value="ECO:0000250"/>
    <property type="project" value="UniProtKB"/>
</dbReference>
<dbReference type="CDD" id="cd00310">
    <property type="entry name" value="ATP-synt_Fo_a_6"/>
    <property type="match status" value="1"/>
</dbReference>
<dbReference type="FunFam" id="1.20.120.220:FF:000004">
    <property type="entry name" value="ATP synthase subunit a"/>
    <property type="match status" value="1"/>
</dbReference>
<dbReference type="Gene3D" id="1.20.120.220">
    <property type="entry name" value="ATP synthase, F0 complex, subunit A"/>
    <property type="match status" value="1"/>
</dbReference>
<dbReference type="InterPro" id="IPR000568">
    <property type="entry name" value="ATP_synth_F0_asu"/>
</dbReference>
<dbReference type="InterPro" id="IPR023011">
    <property type="entry name" value="ATP_synth_F0_asu_AS"/>
</dbReference>
<dbReference type="InterPro" id="IPR045083">
    <property type="entry name" value="ATP_synth_F0_asu_bact/mt"/>
</dbReference>
<dbReference type="InterPro" id="IPR035908">
    <property type="entry name" value="F0_ATP_A_sf"/>
</dbReference>
<dbReference type="NCBIfam" id="TIGR01131">
    <property type="entry name" value="ATP_synt_6_or_A"/>
    <property type="match status" value="1"/>
</dbReference>
<dbReference type="PANTHER" id="PTHR11410">
    <property type="entry name" value="ATP SYNTHASE SUBUNIT A"/>
    <property type="match status" value="1"/>
</dbReference>
<dbReference type="PANTHER" id="PTHR11410:SF0">
    <property type="entry name" value="ATP SYNTHASE SUBUNIT A"/>
    <property type="match status" value="1"/>
</dbReference>
<dbReference type="Pfam" id="PF00119">
    <property type="entry name" value="ATP-synt_A"/>
    <property type="match status" value="1"/>
</dbReference>
<dbReference type="PRINTS" id="PR00123">
    <property type="entry name" value="ATPASEA"/>
</dbReference>
<dbReference type="SUPFAM" id="SSF81336">
    <property type="entry name" value="F1F0 ATP synthase subunit A"/>
    <property type="match status" value="1"/>
</dbReference>
<dbReference type="PROSITE" id="PS00449">
    <property type="entry name" value="ATPASE_A"/>
    <property type="match status" value="1"/>
</dbReference>
<reference key="1">
    <citation type="journal article" date="1998" name="J. Mol. Evol.">
        <title>Molecular timing of primate divergences as estimated by two nonprimate calibration points.</title>
        <authorList>
            <person name="Arnason U."/>
            <person name="Gullberg A."/>
            <person name="Janke A."/>
        </authorList>
    </citation>
    <scope>NUCLEOTIDE SEQUENCE [GENOMIC DNA]</scope>
</reference>
<proteinExistence type="inferred from homology"/>